<name>RL24_LEPIN</name>
<protein>
    <recommendedName>
        <fullName evidence="1">Large ribosomal subunit protein uL24</fullName>
    </recommendedName>
    <alternativeName>
        <fullName evidence="2">50S ribosomal protein L24</fullName>
    </alternativeName>
</protein>
<proteinExistence type="inferred from homology"/>
<feature type="chain" id="PRO_0000130670" description="Large ribosomal subunit protein uL24">
    <location>
        <begin position="1"/>
        <end position="119"/>
    </location>
</feature>
<feature type="sequence conflict" description="In Ref. 1; AAD40594." evidence="2" ref="1">
    <original>R</original>
    <variation>I</variation>
    <location>
        <position position="113"/>
    </location>
</feature>
<comment type="function">
    <text evidence="1">One of two assembly initiator proteins, it binds directly to the 5'-end of the 23S rRNA, where it nucleates assembly of the 50S subunit.</text>
</comment>
<comment type="function">
    <text evidence="1">One of the proteins that surrounds the polypeptide exit tunnel on the outside of the subunit.</text>
</comment>
<comment type="subunit">
    <text evidence="1">Part of the 50S ribosomal subunit.</text>
</comment>
<comment type="similarity">
    <text evidence="1">Belongs to the universal ribosomal protein uL24 family.</text>
</comment>
<evidence type="ECO:0000255" key="1">
    <source>
        <dbReference type="HAMAP-Rule" id="MF_01326"/>
    </source>
</evidence>
<evidence type="ECO:0000305" key="2"/>
<organism>
    <name type="scientific">Leptospira interrogans serogroup Icterohaemorrhagiae serovar Lai (strain 56601)</name>
    <dbReference type="NCBI Taxonomy" id="189518"/>
    <lineage>
        <taxon>Bacteria</taxon>
        <taxon>Pseudomonadati</taxon>
        <taxon>Spirochaetota</taxon>
        <taxon>Spirochaetia</taxon>
        <taxon>Leptospirales</taxon>
        <taxon>Leptospiraceae</taxon>
        <taxon>Leptospira</taxon>
    </lineage>
</organism>
<sequence>MAKLTYRGSEYTKFKKFRIKKNDEVICITGKHKGKRGKVLSIDKKRDRVIVEGLNKRKRFMRPTQENPQGGVIEVEAPIHISNVMFYDPKKKKKAGVRVGFETVKGKKVRVSRPDKKEL</sequence>
<reference key="1">
    <citation type="journal article" date="2000" name="FEMS Microbiol. Lett.">
        <title>Characterization of the Leptospira interrogans S10-spc-alpha operon.</title>
        <authorList>
            <person name="Zuerner R.L."/>
            <person name="Hartskeerl R.A."/>
            <person name="van de Kemp H."/>
            <person name="Bal A.E."/>
        </authorList>
    </citation>
    <scope>NUCLEOTIDE SEQUENCE [GENOMIC DNA]</scope>
    <source>
        <strain>Lai / Serogroup Icterohaemorrhagiae / Serovar lai</strain>
    </source>
</reference>
<reference key="2">
    <citation type="journal article" date="2003" name="Nature">
        <title>Unique physiological and pathogenic features of Leptospira interrogans revealed by whole-genome sequencing.</title>
        <authorList>
            <person name="Ren S.-X."/>
            <person name="Fu G."/>
            <person name="Jiang X.-G."/>
            <person name="Zeng R."/>
            <person name="Miao Y.-G."/>
            <person name="Xu H."/>
            <person name="Zhang Y.-X."/>
            <person name="Xiong H."/>
            <person name="Lu G."/>
            <person name="Lu L.-F."/>
            <person name="Jiang H.-Q."/>
            <person name="Jia J."/>
            <person name="Tu Y.-F."/>
            <person name="Jiang J.-X."/>
            <person name="Gu W.-Y."/>
            <person name="Zhang Y.-Q."/>
            <person name="Cai Z."/>
            <person name="Sheng H.-H."/>
            <person name="Yin H.-F."/>
            <person name="Zhang Y."/>
            <person name="Zhu G.-F."/>
            <person name="Wan M."/>
            <person name="Huang H.-L."/>
            <person name="Qian Z."/>
            <person name="Wang S.-Y."/>
            <person name="Ma W."/>
            <person name="Yao Z.-J."/>
            <person name="Shen Y."/>
            <person name="Qiang B.-Q."/>
            <person name="Xia Q.-C."/>
            <person name="Guo X.-K."/>
            <person name="Danchin A."/>
            <person name="Saint Girons I."/>
            <person name="Somerville R.L."/>
            <person name="Wen Y.-M."/>
            <person name="Shi M.-H."/>
            <person name="Chen Z."/>
            <person name="Xu J.-G."/>
            <person name="Zhao G.-P."/>
        </authorList>
    </citation>
    <scope>NUCLEOTIDE SEQUENCE [LARGE SCALE GENOMIC DNA]</scope>
    <source>
        <strain>56601</strain>
    </source>
</reference>
<gene>
    <name evidence="1" type="primary">rplX</name>
    <name type="ordered locus">LA_0750</name>
</gene>
<dbReference type="EMBL" id="AF115283">
    <property type="protein sequence ID" value="AAD40594.1"/>
    <property type="molecule type" value="Genomic_DNA"/>
</dbReference>
<dbReference type="EMBL" id="AE010300">
    <property type="protein sequence ID" value="AAN47949.1"/>
    <property type="molecule type" value="Genomic_DNA"/>
</dbReference>
<dbReference type="RefSeq" id="NP_710931.1">
    <property type="nucleotide sequence ID" value="NC_004342.2"/>
</dbReference>
<dbReference type="RefSeq" id="WP_001096782.1">
    <property type="nucleotide sequence ID" value="NC_004342.2"/>
</dbReference>
<dbReference type="SMR" id="Q9XD25"/>
<dbReference type="FunCoup" id="Q9XD25">
    <property type="interactions" value="514"/>
</dbReference>
<dbReference type="STRING" id="189518.LA_0750"/>
<dbReference type="PaxDb" id="189518-LA_0750"/>
<dbReference type="EnsemblBacteria" id="AAN47949">
    <property type="protein sequence ID" value="AAN47949"/>
    <property type="gene ID" value="LA_0750"/>
</dbReference>
<dbReference type="GeneID" id="61142736"/>
<dbReference type="KEGG" id="lil:LA_0750"/>
<dbReference type="PATRIC" id="fig|189518.3.peg.756"/>
<dbReference type="HOGENOM" id="CLU_093315_2_0_12"/>
<dbReference type="InParanoid" id="Q9XD25"/>
<dbReference type="OrthoDB" id="9807419at2"/>
<dbReference type="Proteomes" id="UP000001408">
    <property type="component" value="Chromosome I"/>
</dbReference>
<dbReference type="GO" id="GO:0022625">
    <property type="term" value="C:cytosolic large ribosomal subunit"/>
    <property type="evidence" value="ECO:0000318"/>
    <property type="project" value="GO_Central"/>
</dbReference>
<dbReference type="GO" id="GO:0019843">
    <property type="term" value="F:rRNA binding"/>
    <property type="evidence" value="ECO:0007669"/>
    <property type="project" value="UniProtKB-UniRule"/>
</dbReference>
<dbReference type="GO" id="GO:0003735">
    <property type="term" value="F:structural constituent of ribosome"/>
    <property type="evidence" value="ECO:0007669"/>
    <property type="project" value="InterPro"/>
</dbReference>
<dbReference type="GO" id="GO:0006412">
    <property type="term" value="P:translation"/>
    <property type="evidence" value="ECO:0000318"/>
    <property type="project" value="GO_Central"/>
</dbReference>
<dbReference type="CDD" id="cd06089">
    <property type="entry name" value="KOW_RPL26"/>
    <property type="match status" value="1"/>
</dbReference>
<dbReference type="FunFam" id="2.30.30.30:FF:000042">
    <property type="entry name" value="50S ribosomal protein L24"/>
    <property type="match status" value="1"/>
</dbReference>
<dbReference type="Gene3D" id="2.30.30.30">
    <property type="match status" value="1"/>
</dbReference>
<dbReference type="HAMAP" id="MF_01326_B">
    <property type="entry name" value="Ribosomal_uL24_B"/>
    <property type="match status" value="1"/>
</dbReference>
<dbReference type="InterPro" id="IPR005824">
    <property type="entry name" value="KOW"/>
</dbReference>
<dbReference type="InterPro" id="IPR014722">
    <property type="entry name" value="Rib_uL2_dom2"/>
</dbReference>
<dbReference type="InterPro" id="IPR003256">
    <property type="entry name" value="Ribosomal_uL24"/>
</dbReference>
<dbReference type="InterPro" id="IPR041988">
    <property type="entry name" value="Ribosomal_uL24_KOW"/>
</dbReference>
<dbReference type="InterPro" id="IPR008991">
    <property type="entry name" value="Translation_prot_SH3-like_sf"/>
</dbReference>
<dbReference type="NCBIfam" id="TIGR01079">
    <property type="entry name" value="rplX_bact"/>
    <property type="match status" value="1"/>
</dbReference>
<dbReference type="PANTHER" id="PTHR12903">
    <property type="entry name" value="MITOCHONDRIAL RIBOSOMAL PROTEIN L24"/>
    <property type="match status" value="1"/>
</dbReference>
<dbReference type="Pfam" id="PF00467">
    <property type="entry name" value="KOW"/>
    <property type="match status" value="1"/>
</dbReference>
<dbReference type="Pfam" id="PF17136">
    <property type="entry name" value="ribosomal_L24"/>
    <property type="match status" value="1"/>
</dbReference>
<dbReference type="SMART" id="SM00739">
    <property type="entry name" value="KOW"/>
    <property type="match status" value="1"/>
</dbReference>
<dbReference type="SUPFAM" id="SSF50104">
    <property type="entry name" value="Translation proteins SH3-like domain"/>
    <property type="match status" value="1"/>
</dbReference>
<keyword id="KW-1185">Reference proteome</keyword>
<keyword id="KW-0687">Ribonucleoprotein</keyword>
<keyword id="KW-0689">Ribosomal protein</keyword>
<keyword id="KW-0694">RNA-binding</keyword>
<keyword id="KW-0699">rRNA-binding</keyword>
<accession>Q9XD25</accession>